<protein>
    <recommendedName>
        <fullName evidence="1">Large ribosomal subunit protein bL36</fullName>
    </recommendedName>
    <alternativeName>
        <fullName evidence="2">50S ribosomal protein L36</fullName>
    </alternativeName>
</protein>
<proteinExistence type="inferred from homology"/>
<reference key="1">
    <citation type="journal article" date="2004" name="J. Infect. Dis.">
        <title>Progress toward characterization of the group A Streptococcus metagenome: complete genome sequence of a macrolide-resistant serotype M6 strain.</title>
        <authorList>
            <person name="Banks D.J."/>
            <person name="Porcella S.F."/>
            <person name="Barbian K.D."/>
            <person name="Beres S.B."/>
            <person name="Philips L.E."/>
            <person name="Voyich J.M."/>
            <person name="DeLeo F.R."/>
            <person name="Martin J.M."/>
            <person name="Somerville G.A."/>
            <person name="Musser J.M."/>
        </authorList>
    </citation>
    <scope>NUCLEOTIDE SEQUENCE [LARGE SCALE GENOMIC DNA]</scope>
    <source>
        <strain>ATCC BAA-946 / MGAS10394</strain>
    </source>
</reference>
<dbReference type="EMBL" id="CP000003">
    <property type="protein sequence ID" value="AAT86251.1"/>
    <property type="molecule type" value="Genomic_DNA"/>
</dbReference>
<dbReference type="RefSeq" id="WP_000868345.1">
    <property type="nucleotide sequence ID" value="NC_006086.1"/>
</dbReference>
<dbReference type="SMR" id="Q5XEB2"/>
<dbReference type="GeneID" id="93860206"/>
<dbReference type="KEGG" id="spa:M6_Spy0116"/>
<dbReference type="HOGENOM" id="CLU_135723_6_2_9"/>
<dbReference type="Proteomes" id="UP000001167">
    <property type="component" value="Chromosome"/>
</dbReference>
<dbReference type="GO" id="GO:0005737">
    <property type="term" value="C:cytoplasm"/>
    <property type="evidence" value="ECO:0007669"/>
    <property type="project" value="UniProtKB-ARBA"/>
</dbReference>
<dbReference type="GO" id="GO:1990904">
    <property type="term" value="C:ribonucleoprotein complex"/>
    <property type="evidence" value="ECO:0007669"/>
    <property type="project" value="UniProtKB-KW"/>
</dbReference>
<dbReference type="GO" id="GO:0005840">
    <property type="term" value="C:ribosome"/>
    <property type="evidence" value="ECO:0007669"/>
    <property type="project" value="UniProtKB-KW"/>
</dbReference>
<dbReference type="GO" id="GO:0003735">
    <property type="term" value="F:structural constituent of ribosome"/>
    <property type="evidence" value="ECO:0007669"/>
    <property type="project" value="InterPro"/>
</dbReference>
<dbReference type="GO" id="GO:0006412">
    <property type="term" value="P:translation"/>
    <property type="evidence" value="ECO:0007669"/>
    <property type="project" value="UniProtKB-UniRule"/>
</dbReference>
<dbReference type="HAMAP" id="MF_00251">
    <property type="entry name" value="Ribosomal_bL36"/>
    <property type="match status" value="1"/>
</dbReference>
<dbReference type="InterPro" id="IPR000473">
    <property type="entry name" value="Ribosomal_bL36"/>
</dbReference>
<dbReference type="InterPro" id="IPR035977">
    <property type="entry name" value="Ribosomal_bL36_sp"/>
</dbReference>
<dbReference type="NCBIfam" id="TIGR01022">
    <property type="entry name" value="rpmJ_bact"/>
    <property type="match status" value="1"/>
</dbReference>
<dbReference type="PANTHER" id="PTHR42888">
    <property type="entry name" value="50S RIBOSOMAL PROTEIN L36, CHLOROPLASTIC"/>
    <property type="match status" value="1"/>
</dbReference>
<dbReference type="PANTHER" id="PTHR42888:SF1">
    <property type="entry name" value="LARGE RIBOSOMAL SUBUNIT PROTEIN BL36C"/>
    <property type="match status" value="1"/>
</dbReference>
<dbReference type="Pfam" id="PF00444">
    <property type="entry name" value="Ribosomal_L36"/>
    <property type="match status" value="1"/>
</dbReference>
<dbReference type="SUPFAM" id="SSF57840">
    <property type="entry name" value="Ribosomal protein L36"/>
    <property type="match status" value="1"/>
</dbReference>
<dbReference type="PROSITE" id="PS00828">
    <property type="entry name" value="RIBOSOMAL_L36"/>
    <property type="match status" value="1"/>
</dbReference>
<comment type="similarity">
    <text evidence="1">Belongs to the bacterial ribosomal protein bL36 family.</text>
</comment>
<gene>
    <name evidence="1" type="primary">rpmJ</name>
    <name type="ordered locus">M6_Spy0116</name>
</gene>
<organism>
    <name type="scientific">Streptococcus pyogenes serotype M6 (strain ATCC BAA-946 / MGAS10394)</name>
    <dbReference type="NCBI Taxonomy" id="286636"/>
    <lineage>
        <taxon>Bacteria</taxon>
        <taxon>Bacillati</taxon>
        <taxon>Bacillota</taxon>
        <taxon>Bacilli</taxon>
        <taxon>Lactobacillales</taxon>
        <taxon>Streptococcaceae</taxon>
        <taxon>Streptococcus</taxon>
    </lineage>
</organism>
<keyword id="KW-0687">Ribonucleoprotein</keyword>
<keyword id="KW-0689">Ribosomal protein</keyword>
<feature type="chain" id="PRO_0000126272" description="Large ribosomal subunit protein bL36">
    <location>
        <begin position="1"/>
        <end position="38"/>
    </location>
</feature>
<name>RL36_STRP6</name>
<accession>Q5XEB2</accession>
<sequence length="38" mass="4451">MKVRPSVKPICEYCKVIRRNGRVMVICPTNPKHKQRQG</sequence>
<evidence type="ECO:0000255" key="1">
    <source>
        <dbReference type="HAMAP-Rule" id="MF_00251"/>
    </source>
</evidence>
<evidence type="ECO:0000305" key="2"/>